<proteinExistence type="evidence at protein level"/>
<gene>
    <name evidence="7" type="primary">Chaf1a</name>
    <name type="synonym">Caip150</name>
</gene>
<comment type="function">
    <text evidence="3">Acts as a component of the histone chaperone complex chromatin assembly factor 1 (CAF-1), which assembles histone octamers onto DNA during replication and repair. CAF-1 performs the first step of the nucleosome assembly process, bringing newly synthesized histones H3 and H4 to replicating DNA; histones H2A/H2B can bind to this chromatin precursor subsequent to DNA replication to complete the histone octamer. It may play a role in heterochromatin maintenance in proliferating cells by bringing newly synthesized cbx proteins to heterochromatic DNA replication foci.</text>
</comment>
<comment type="subunit">
    <text evidence="2">Homodimer. Part of the CAF-1 complex that contains RBBP4, CHAF1B and CHAF1A. CHAF1A binds directly to CHAF1B. Only minor amounts of RBBP4 are complexed with CHAF1A and CHAF1B in G1 phase. Interacts with PCNA; the interaction is direct. Interacts (via the PxVxL motif) with CBX5; the interaction is direct. Interacts with MBD1. Interacts with histones H3.1, H3.2 and H3.1t.</text>
</comment>
<comment type="interaction">
    <interactant intactId="EBI-639217">
        <id>Q9QWF0</id>
    </interactant>
    <interactant intactId="EBI-78119">
        <id>P83917</id>
        <label>Cbx1</label>
    </interactant>
    <organismsDiffer>false</organismsDiffer>
    <experiments>3</experiments>
</comment>
<comment type="interaction">
    <interactant intactId="EBI-639217">
        <id>Q9QWF0</id>
    </interactant>
    <interactant intactId="EBI-3954754">
        <id>P70338</id>
        <label>Gfi1</label>
    </interactant>
    <organismsDiffer>false</organismsDiffer>
    <experiments>5</experiments>
</comment>
<comment type="subcellular location">
    <subcellularLocation>
        <location evidence="2">Nucleus</location>
    </subcellularLocation>
    <text evidence="2">DNA replication foci.</text>
</comment>
<comment type="domain">
    <text>Contains one Pro-Xaa-Val-Xaa-Leu (PxVxL) motif, which is required for interaction with chromoshadow domains. This motif requires additional residues -7, -6, +4 and +5 of the central Val which contact the chromoshadow domain.</text>
</comment>
<comment type="similarity">
    <text evidence="6">Belongs to the CHAF1A family.</text>
</comment>
<keyword id="KW-0002">3D-structure</keyword>
<keyword id="KW-0131">Cell cycle</keyword>
<keyword id="KW-0143">Chaperone</keyword>
<keyword id="KW-0156">Chromatin regulator</keyword>
<keyword id="KW-0227">DNA damage</keyword>
<keyword id="KW-0234">DNA repair</keyword>
<keyword id="KW-0235">DNA replication</keyword>
<keyword id="KW-0539">Nucleus</keyword>
<keyword id="KW-0597">Phosphoprotein</keyword>
<keyword id="KW-1185">Reference proteome</keyword>
<accession>Q9QWF0</accession>
<accession>Q3TU22</accession>
<accession>Q544M2</accession>
<sequence length="911" mass="101936">MLEEPEAATRTAAAVDCKDRPGFPVKRLIQARLPFKRLNLVPKEKVEEDTSPKAAVESKVPDLQLSLGTFESQCHTGSHVGLSTKLVGGQGPIDSFLRATIKPVPSVVIIDLTENCSDIPDSPEGHSELSPDTAGVVTTVEGAAKQQEHSAAELCLLETPSDITCHMEEEPGSPGDPKRTGDCQAGSLQSCPELTPGSRTCPTKELSSWSKAGDLLFIEKVPVVVLEDILATKPSIASLPMMSLDRSVTSESEILESCPEDDSILSHSSTNSSSPTSSPEGPSTPPEHRGGRSSPSTPACRVAKNFVKGSTEKGRSKLHRDREQQREEKEKLREEIRRAKEEARKKKEEEKELKEKERREKREKDEKEKAEKQRLKEEKRKERQEALEAKLEEKRKKEEEKRLREEEKRLREEEKRIKAEKAEITRFFQKPKTPQAPKTLAGSCGKFAPFEIKEHMVLAPRCRAALDQDLCDQLDQLLQQQSVASTFLSDLKSRLPLRSGPTRVCGHDTDIMNRDVVIVESSKVDGVSERKKFGRMKLLQFSENHRPAYWGTWNKKTAIIRPRNPWAQDKDLLDYEVDSDDEWEEEEPGESLSHSEGDEDDDVGEDEDEDDGFFVPHGYLSEDEGVTEECADPENHKVHQKLKAKEWDELLAKGKRFRVLQPVHVGCVWASEAANCTSSDLKLLQQFTACLLDVASPDEPEPGASRREKRDQHILAQLLPLLHGNVNGSKVIIHEFQEQCRRGLLTLPSPTPHLQMPNLEDAVAVPSKARLKRLISENSAYEKRPNFRMCWYVHPEVLKSFGQECLPVPCQWTYITTMPSAPREDSGSASTEGPGQSTPMLLKRKPAATMCITQFMKKRRYDGQVGSGDMDGFQADTEEDEEDDTDCMIIDVPDVGSDVSEAPIPAPTLCK</sequence>
<name>CAF1A_MOUSE</name>
<evidence type="ECO:0000250" key="1"/>
<evidence type="ECO:0000250" key="2">
    <source>
        <dbReference type="UniProtKB" id="Q13111"/>
    </source>
</evidence>
<evidence type="ECO:0000250" key="3">
    <source>
        <dbReference type="UniProtKB" id="Q5R1T0"/>
    </source>
</evidence>
<evidence type="ECO:0000256" key="4">
    <source>
        <dbReference type="SAM" id="MobiDB-lite"/>
    </source>
</evidence>
<evidence type="ECO:0000269" key="5">
    <source>
    </source>
</evidence>
<evidence type="ECO:0000305" key="6"/>
<evidence type="ECO:0000312" key="7">
    <source>
        <dbReference type="MGI" id="MGI:1351331"/>
    </source>
</evidence>
<evidence type="ECO:0007829" key="8">
    <source>
        <dbReference type="PDB" id="1S4Z"/>
    </source>
</evidence>
<dbReference type="EMBL" id="AJ132771">
    <property type="protein sequence ID" value="CAB55497.2"/>
    <property type="molecule type" value="mRNA"/>
</dbReference>
<dbReference type="EMBL" id="AK034839">
    <property type="protein sequence ID" value="BAC28848.1"/>
    <property type="molecule type" value="mRNA"/>
</dbReference>
<dbReference type="EMBL" id="AK161016">
    <property type="protein sequence ID" value="BAE36149.1"/>
    <property type="molecule type" value="mRNA"/>
</dbReference>
<dbReference type="EMBL" id="CH466559">
    <property type="protein sequence ID" value="EDL23708.1"/>
    <property type="molecule type" value="Genomic_DNA"/>
</dbReference>
<dbReference type="EMBL" id="BC053740">
    <property type="protein sequence ID" value="AAH53740.1"/>
    <property type="molecule type" value="mRNA"/>
</dbReference>
<dbReference type="CCDS" id="CCDS28892.1"/>
<dbReference type="RefSeq" id="NP_038761.1">
    <property type="nucleotide sequence ID" value="NM_013733.4"/>
</dbReference>
<dbReference type="PDB" id="1S4Z">
    <property type="method" value="NMR"/>
    <property type="chains" value="C=210-238"/>
</dbReference>
<dbReference type="PDBsum" id="1S4Z"/>
<dbReference type="SMR" id="Q9QWF0"/>
<dbReference type="BioGRID" id="205142">
    <property type="interactions" value="163"/>
</dbReference>
<dbReference type="ComplexPortal" id="CPX-570">
    <property type="entry name" value="Chromatin assembly factor 1 complex"/>
</dbReference>
<dbReference type="ELM" id="Q9QWF0"/>
<dbReference type="FunCoup" id="Q9QWF0">
    <property type="interactions" value="1427"/>
</dbReference>
<dbReference type="IntAct" id="Q9QWF0">
    <property type="interactions" value="17"/>
</dbReference>
<dbReference type="STRING" id="10090.ENSMUSP00000002914"/>
<dbReference type="GlyGen" id="Q9QWF0">
    <property type="glycosylation" value="3 sites, 1 O-linked glycan (1 site)"/>
</dbReference>
<dbReference type="iPTMnet" id="Q9QWF0"/>
<dbReference type="PhosphoSitePlus" id="Q9QWF0"/>
<dbReference type="jPOST" id="Q9QWF0"/>
<dbReference type="PaxDb" id="10090-ENSMUSP00000002914"/>
<dbReference type="PeptideAtlas" id="Q9QWF0"/>
<dbReference type="ProteomicsDB" id="265501"/>
<dbReference type="Pumba" id="Q9QWF0"/>
<dbReference type="Antibodypedia" id="4198">
    <property type="antibodies" value="242 antibodies from 33 providers"/>
</dbReference>
<dbReference type="DNASU" id="27221"/>
<dbReference type="Ensembl" id="ENSMUST00000002914.10">
    <property type="protein sequence ID" value="ENSMUSP00000002914.9"/>
    <property type="gene ID" value="ENSMUSG00000002835.10"/>
</dbReference>
<dbReference type="GeneID" id="27221"/>
<dbReference type="KEGG" id="mmu:27221"/>
<dbReference type="UCSC" id="uc008dar.1">
    <property type="organism name" value="mouse"/>
</dbReference>
<dbReference type="AGR" id="MGI:1351331"/>
<dbReference type="CTD" id="10036"/>
<dbReference type="MGI" id="MGI:1351331">
    <property type="gene designation" value="Chaf1a"/>
</dbReference>
<dbReference type="VEuPathDB" id="HostDB:ENSMUSG00000002835"/>
<dbReference type="eggNOG" id="KOG4364">
    <property type="taxonomic scope" value="Eukaryota"/>
</dbReference>
<dbReference type="GeneTree" id="ENSGT00440000034888"/>
<dbReference type="HOGENOM" id="CLU_014846_0_0_1"/>
<dbReference type="InParanoid" id="Q9QWF0"/>
<dbReference type="OMA" id="DPWAQDK"/>
<dbReference type="OrthoDB" id="79480at2759"/>
<dbReference type="PhylomeDB" id="Q9QWF0"/>
<dbReference type="TreeFam" id="TF350377"/>
<dbReference type="BioGRID-ORCS" id="27221">
    <property type="hits" value="14 hits in 118 CRISPR screens"/>
</dbReference>
<dbReference type="ChiTaRS" id="Chaf1a">
    <property type="organism name" value="mouse"/>
</dbReference>
<dbReference type="EvolutionaryTrace" id="Q9QWF0"/>
<dbReference type="PRO" id="PR:Q9QWF0"/>
<dbReference type="Proteomes" id="UP000000589">
    <property type="component" value="Chromosome 17"/>
</dbReference>
<dbReference type="RNAct" id="Q9QWF0">
    <property type="molecule type" value="protein"/>
</dbReference>
<dbReference type="Bgee" id="ENSMUSG00000002835">
    <property type="expression patterns" value="Expressed in primary oocyte and 94 other cell types or tissues"/>
</dbReference>
<dbReference type="ExpressionAtlas" id="Q9QWF0">
    <property type="expression patterns" value="baseline and differential"/>
</dbReference>
<dbReference type="GO" id="GO:0033186">
    <property type="term" value="C:CAF-1 complex"/>
    <property type="evidence" value="ECO:0000250"/>
    <property type="project" value="UniProtKB"/>
</dbReference>
<dbReference type="GO" id="GO:0000785">
    <property type="term" value="C:chromatin"/>
    <property type="evidence" value="ECO:0000266"/>
    <property type="project" value="ComplexPortal"/>
</dbReference>
<dbReference type="GO" id="GO:0005634">
    <property type="term" value="C:nucleus"/>
    <property type="evidence" value="ECO:0007669"/>
    <property type="project" value="UniProtKB-SubCell"/>
</dbReference>
<dbReference type="GO" id="GO:0070087">
    <property type="term" value="F:chromo shadow domain binding"/>
    <property type="evidence" value="ECO:0007669"/>
    <property type="project" value="Ensembl"/>
</dbReference>
<dbReference type="GO" id="GO:0042802">
    <property type="term" value="F:identical protein binding"/>
    <property type="evidence" value="ECO:0007669"/>
    <property type="project" value="Ensembl"/>
</dbReference>
<dbReference type="GO" id="GO:0006281">
    <property type="term" value="P:DNA repair"/>
    <property type="evidence" value="ECO:0007669"/>
    <property type="project" value="UniProtKB-KW"/>
</dbReference>
<dbReference type="GO" id="GO:0006260">
    <property type="term" value="P:DNA replication"/>
    <property type="evidence" value="ECO:0007669"/>
    <property type="project" value="UniProtKB-KW"/>
</dbReference>
<dbReference type="GO" id="GO:0006335">
    <property type="term" value="P:DNA replication-dependent chromatin assembly"/>
    <property type="evidence" value="ECO:0000250"/>
    <property type="project" value="UniProtKB"/>
</dbReference>
<dbReference type="GO" id="GO:0006334">
    <property type="term" value="P:nucleosome assembly"/>
    <property type="evidence" value="ECO:0007669"/>
    <property type="project" value="Ensembl"/>
</dbReference>
<dbReference type="IDEAL" id="IID50294"/>
<dbReference type="InterPro" id="IPR021644">
    <property type="entry name" value="CAF-1_p150_acidic"/>
</dbReference>
<dbReference type="InterPro" id="IPR029105">
    <property type="entry name" value="CAF1-p150_C2"/>
</dbReference>
<dbReference type="InterPro" id="IPR029091">
    <property type="entry name" value="CAF1_p150_N"/>
</dbReference>
<dbReference type="InterPro" id="IPR022043">
    <property type="entry name" value="CAF1A_DD"/>
</dbReference>
<dbReference type="PANTHER" id="PTHR15272:SF0">
    <property type="entry name" value="CHROMATIN ASSEMBLY FACTOR 1 SUBUNIT A"/>
    <property type="match status" value="1"/>
</dbReference>
<dbReference type="PANTHER" id="PTHR15272">
    <property type="entry name" value="CHROMATIN ASSEMBLY FACTOR 1 SUBUNIT A CAF-1 SUBUNIT A"/>
    <property type="match status" value="1"/>
</dbReference>
<dbReference type="Pfam" id="PF15539">
    <property type="entry name" value="CAF1-p150_C2"/>
    <property type="match status" value="1"/>
</dbReference>
<dbReference type="Pfam" id="PF15557">
    <property type="entry name" value="CAF1-p150_N"/>
    <property type="match status" value="1"/>
</dbReference>
<dbReference type="Pfam" id="PF11600">
    <property type="entry name" value="CAF1A_acidic"/>
    <property type="match status" value="1"/>
</dbReference>
<dbReference type="Pfam" id="PF12253">
    <property type="entry name" value="CAF1A_dimeriz"/>
    <property type="match status" value="1"/>
</dbReference>
<feature type="chain" id="PRO_0000089277" description="Chromatin assembly factor 1 subunit A">
    <location>
        <begin position="1"/>
        <end position="911"/>
    </location>
</feature>
<feature type="region of interest" description="Binds PCNA" evidence="1">
    <location>
        <begin position="1"/>
        <end position="31"/>
    </location>
</feature>
<feature type="region of interest" description="Disordered" evidence="4">
    <location>
        <begin position="166"/>
        <end position="200"/>
    </location>
</feature>
<feature type="region of interest" description="Binds CBX1 and CBX3 chromo shadow domains">
    <location>
        <begin position="176"/>
        <end position="327"/>
    </location>
</feature>
<feature type="region of interest" description="Disordered" evidence="4">
    <location>
        <begin position="250"/>
        <end position="408"/>
    </location>
</feature>
<feature type="region of interest" description="Disordered" evidence="4">
    <location>
        <begin position="578"/>
        <end position="618"/>
    </location>
</feature>
<feature type="region of interest" description="Necessary for homodimerization and competence for chromatin assembly" evidence="1">
    <location>
        <begin position="621"/>
        <end position="657"/>
    </location>
</feature>
<feature type="region of interest" description="Binds to p60" evidence="1">
    <location>
        <begin position="639"/>
        <end position="911"/>
    </location>
</feature>
<feature type="region of interest" description="Disordered" evidence="4">
    <location>
        <begin position="819"/>
        <end position="843"/>
    </location>
</feature>
<feature type="region of interest" description="Disordered" evidence="4">
    <location>
        <begin position="866"/>
        <end position="886"/>
    </location>
</feature>
<feature type="short sequence motif" description="PxVxL motif">
    <location>
        <begin position="217"/>
        <end position="230"/>
    </location>
</feature>
<feature type="compositionally biased region" description="Polar residues" evidence="4">
    <location>
        <begin position="186"/>
        <end position="200"/>
    </location>
</feature>
<feature type="compositionally biased region" description="Low complexity" evidence="4">
    <location>
        <begin position="265"/>
        <end position="281"/>
    </location>
</feature>
<feature type="compositionally biased region" description="Basic and acidic residues" evidence="4">
    <location>
        <begin position="310"/>
        <end position="408"/>
    </location>
</feature>
<feature type="compositionally biased region" description="Acidic residues" evidence="4">
    <location>
        <begin position="578"/>
        <end position="589"/>
    </location>
</feature>
<feature type="compositionally biased region" description="Acidic residues" evidence="4">
    <location>
        <begin position="597"/>
        <end position="612"/>
    </location>
</feature>
<feature type="compositionally biased region" description="Polar residues" evidence="4">
    <location>
        <begin position="827"/>
        <end position="839"/>
    </location>
</feature>
<feature type="compositionally biased region" description="Acidic residues" evidence="4">
    <location>
        <begin position="876"/>
        <end position="886"/>
    </location>
</feature>
<feature type="modified residue" description="Phosphoserine" evidence="2">
    <location>
        <position position="190"/>
    </location>
</feature>
<feature type="modified residue" description="Phosphoserine" evidence="2">
    <location>
        <position position="208"/>
    </location>
</feature>
<feature type="modified residue" description="Phosphoserine" evidence="2">
    <location>
        <position position="293"/>
    </location>
</feature>
<feature type="modified residue" description="Phosphoserine" evidence="2">
    <location>
        <position position="776"/>
    </location>
</feature>
<feature type="modified residue" description="Phosphothreonine" evidence="2">
    <location>
        <position position="838"/>
    </location>
</feature>
<feature type="mutagenesis site" description="Prevents binding to CBX1 and CBX5." evidence="5">
    <original>V</original>
    <variation>N</variation>
    <variation>E</variation>
    <location>
        <position position="224"/>
    </location>
</feature>
<feature type="mutagenesis site" description="Prevents binding to CBX1 and CBX5." evidence="5">
    <original>V</original>
    <variation>S</variation>
    <variation>D</variation>
    <location>
        <position position="224"/>
    </location>
</feature>
<feature type="strand" evidence="8">
    <location>
        <begin position="222"/>
        <end position="224"/>
    </location>
</feature>
<feature type="turn" evidence="8">
    <location>
        <begin position="228"/>
        <end position="230"/>
    </location>
</feature>
<reference key="1">
    <citation type="journal article" date="1999" name="Mol. Cell">
        <title>Heterochromatin dynamics in mouse cells: interaction between chromatin assembly factor 1 and HP1 proteins.</title>
        <authorList>
            <person name="Murzina N.V."/>
            <person name="Verreault A."/>
            <person name="Laue E.D."/>
            <person name="Stillman B."/>
        </authorList>
    </citation>
    <scope>NUCLEOTIDE SEQUENCE [MRNA]</scope>
    <scope>MUTAGENESIS</scope>
    <scope>INTERACTION WITH HP1 PROTEINS</scope>
</reference>
<reference key="2">
    <citation type="journal article" date="2005" name="Science">
        <title>The transcriptional landscape of the mammalian genome.</title>
        <authorList>
            <person name="Carninci P."/>
            <person name="Kasukawa T."/>
            <person name="Katayama S."/>
            <person name="Gough J."/>
            <person name="Frith M.C."/>
            <person name="Maeda N."/>
            <person name="Oyama R."/>
            <person name="Ravasi T."/>
            <person name="Lenhard B."/>
            <person name="Wells C."/>
            <person name="Kodzius R."/>
            <person name="Shimokawa K."/>
            <person name="Bajic V.B."/>
            <person name="Brenner S.E."/>
            <person name="Batalov S."/>
            <person name="Forrest A.R."/>
            <person name="Zavolan M."/>
            <person name="Davis M.J."/>
            <person name="Wilming L.G."/>
            <person name="Aidinis V."/>
            <person name="Allen J.E."/>
            <person name="Ambesi-Impiombato A."/>
            <person name="Apweiler R."/>
            <person name="Aturaliya R.N."/>
            <person name="Bailey T.L."/>
            <person name="Bansal M."/>
            <person name="Baxter L."/>
            <person name="Beisel K.W."/>
            <person name="Bersano T."/>
            <person name="Bono H."/>
            <person name="Chalk A.M."/>
            <person name="Chiu K.P."/>
            <person name="Choudhary V."/>
            <person name="Christoffels A."/>
            <person name="Clutterbuck D.R."/>
            <person name="Crowe M.L."/>
            <person name="Dalla E."/>
            <person name="Dalrymple B.P."/>
            <person name="de Bono B."/>
            <person name="Della Gatta G."/>
            <person name="di Bernardo D."/>
            <person name="Down T."/>
            <person name="Engstrom P."/>
            <person name="Fagiolini M."/>
            <person name="Faulkner G."/>
            <person name="Fletcher C.F."/>
            <person name="Fukushima T."/>
            <person name="Furuno M."/>
            <person name="Futaki S."/>
            <person name="Gariboldi M."/>
            <person name="Georgii-Hemming P."/>
            <person name="Gingeras T.R."/>
            <person name="Gojobori T."/>
            <person name="Green R.E."/>
            <person name="Gustincich S."/>
            <person name="Harbers M."/>
            <person name="Hayashi Y."/>
            <person name="Hensch T.K."/>
            <person name="Hirokawa N."/>
            <person name="Hill D."/>
            <person name="Huminiecki L."/>
            <person name="Iacono M."/>
            <person name="Ikeo K."/>
            <person name="Iwama A."/>
            <person name="Ishikawa T."/>
            <person name="Jakt M."/>
            <person name="Kanapin A."/>
            <person name="Katoh M."/>
            <person name="Kawasawa Y."/>
            <person name="Kelso J."/>
            <person name="Kitamura H."/>
            <person name="Kitano H."/>
            <person name="Kollias G."/>
            <person name="Krishnan S.P."/>
            <person name="Kruger A."/>
            <person name="Kummerfeld S.K."/>
            <person name="Kurochkin I.V."/>
            <person name="Lareau L.F."/>
            <person name="Lazarevic D."/>
            <person name="Lipovich L."/>
            <person name="Liu J."/>
            <person name="Liuni S."/>
            <person name="McWilliam S."/>
            <person name="Madan Babu M."/>
            <person name="Madera M."/>
            <person name="Marchionni L."/>
            <person name="Matsuda H."/>
            <person name="Matsuzawa S."/>
            <person name="Miki H."/>
            <person name="Mignone F."/>
            <person name="Miyake S."/>
            <person name="Morris K."/>
            <person name="Mottagui-Tabar S."/>
            <person name="Mulder N."/>
            <person name="Nakano N."/>
            <person name="Nakauchi H."/>
            <person name="Ng P."/>
            <person name="Nilsson R."/>
            <person name="Nishiguchi S."/>
            <person name="Nishikawa S."/>
            <person name="Nori F."/>
            <person name="Ohara O."/>
            <person name="Okazaki Y."/>
            <person name="Orlando V."/>
            <person name="Pang K.C."/>
            <person name="Pavan W.J."/>
            <person name="Pavesi G."/>
            <person name="Pesole G."/>
            <person name="Petrovsky N."/>
            <person name="Piazza S."/>
            <person name="Reed J."/>
            <person name="Reid J.F."/>
            <person name="Ring B.Z."/>
            <person name="Ringwald M."/>
            <person name="Rost B."/>
            <person name="Ruan Y."/>
            <person name="Salzberg S.L."/>
            <person name="Sandelin A."/>
            <person name="Schneider C."/>
            <person name="Schoenbach C."/>
            <person name="Sekiguchi K."/>
            <person name="Semple C.A."/>
            <person name="Seno S."/>
            <person name="Sessa L."/>
            <person name="Sheng Y."/>
            <person name="Shibata Y."/>
            <person name="Shimada H."/>
            <person name="Shimada K."/>
            <person name="Silva D."/>
            <person name="Sinclair B."/>
            <person name="Sperling S."/>
            <person name="Stupka E."/>
            <person name="Sugiura K."/>
            <person name="Sultana R."/>
            <person name="Takenaka Y."/>
            <person name="Taki K."/>
            <person name="Tammoja K."/>
            <person name="Tan S.L."/>
            <person name="Tang S."/>
            <person name="Taylor M.S."/>
            <person name="Tegner J."/>
            <person name="Teichmann S.A."/>
            <person name="Ueda H.R."/>
            <person name="van Nimwegen E."/>
            <person name="Verardo R."/>
            <person name="Wei C.L."/>
            <person name="Yagi K."/>
            <person name="Yamanishi H."/>
            <person name="Zabarovsky E."/>
            <person name="Zhu S."/>
            <person name="Zimmer A."/>
            <person name="Hide W."/>
            <person name="Bult C."/>
            <person name="Grimmond S.M."/>
            <person name="Teasdale R.D."/>
            <person name="Liu E.T."/>
            <person name="Brusic V."/>
            <person name="Quackenbush J."/>
            <person name="Wahlestedt C."/>
            <person name="Mattick J.S."/>
            <person name="Hume D.A."/>
            <person name="Kai C."/>
            <person name="Sasaki D."/>
            <person name="Tomaru Y."/>
            <person name="Fukuda S."/>
            <person name="Kanamori-Katayama M."/>
            <person name="Suzuki M."/>
            <person name="Aoki J."/>
            <person name="Arakawa T."/>
            <person name="Iida J."/>
            <person name="Imamura K."/>
            <person name="Itoh M."/>
            <person name="Kato T."/>
            <person name="Kawaji H."/>
            <person name="Kawagashira N."/>
            <person name="Kawashima T."/>
            <person name="Kojima M."/>
            <person name="Kondo S."/>
            <person name="Konno H."/>
            <person name="Nakano K."/>
            <person name="Ninomiya N."/>
            <person name="Nishio T."/>
            <person name="Okada M."/>
            <person name="Plessy C."/>
            <person name="Shibata K."/>
            <person name="Shiraki T."/>
            <person name="Suzuki S."/>
            <person name="Tagami M."/>
            <person name="Waki K."/>
            <person name="Watahiki A."/>
            <person name="Okamura-Oho Y."/>
            <person name="Suzuki H."/>
            <person name="Kawai J."/>
            <person name="Hayashizaki Y."/>
        </authorList>
    </citation>
    <scope>NUCLEOTIDE SEQUENCE [LARGE SCALE MRNA]</scope>
    <source>
        <strain>C57BL/6J</strain>
        <tissue>Embryo</tissue>
        <tissue>Head</tissue>
    </source>
</reference>
<reference key="3">
    <citation type="submission" date="2005-07" db="EMBL/GenBank/DDBJ databases">
        <authorList>
            <person name="Mural R.J."/>
            <person name="Adams M.D."/>
            <person name="Myers E.W."/>
            <person name="Smith H.O."/>
            <person name="Venter J.C."/>
        </authorList>
    </citation>
    <scope>NUCLEOTIDE SEQUENCE [LARGE SCALE GENOMIC DNA]</scope>
</reference>
<reference key="4">
    <citation type="journal article" date="2004" name="Genome Res.">
        <title>The status, quality, and expansion of the NIH full-length cDNA project: the Mammalian Gene Collection (MGC).</title>
        <authorList>
            <consortium name="The MGC Project Team"/>
        </authorList>
    </citation>
    <scope>NUCLEOTIDE SEQUENCE [LARGE SCALE MRNA]</scope>
    <source>
        <tissue>Limb</tissue>
    </source>
</reference>
<reference key="5">
    <citation type="journal article" date="2003" name="Mol. Cell. Biol.">
        <title>The methyl-CpG binding protein MBD1 interacts with the p150 subunit of chromatin assembly factor 1.</title>
        <authorList>
            <person name="Reese B.E."/>
            <person name="Bachman K.E."/>
            <person name="Baylin S.B."/>
            <person name="Rountree M.R."/>
        </authorList>
    </citation>
    <scope>INTERACTION WITH MBD1</scope>
</reference>
<organism>
    <name type="scientific">Mus musculus</name>
    <name type="common">Mouse</name>
    <dbReference type="NCBI Taxonomy" id="10090"/>
    <lineage>
        <taxon>Eukaryota</taxon>
        <taxon>Metazoa</taxon>
        <taxon>Chordata</taxon>
        <taxon>Craniata</taxon>
        <taxon>Vertebrata</taxon>
        <taxon>Euteleostomi</taxon>
        <taxon>Mammalia</taxon>
        <taxon>Eutheria</taxon>
        <taxon>Euarchontoglires</taxon>
        <taxon>Glires</taxon>
        <taxon>Rodentia</taxon>
        <taxon>Myomorpha</taxon>
        <taxon>Muroidea</taxon>
        <taxon>Muridae</taxon>
        <taxon>Murinae</taxon>
        <taxon>Mus</taxon>
        <taxon>Mus</taxon>
    </lineage>
</organism>
<protein>
    <recommendedName>
        <fullName evidence="6">Chromatin assembly factor 1 subunit A</fullName>
        <shortName>CAF-1 subunit A</shortName>
    </recommendedName>
    <alternativeName>
        <fullName>Chromatin assembly factor I p150 subunit</fullName>
        <shortName>CAF-I 150 kDa subunit</shortName>
        <shortName>CAF-I p150</shortName>
    </alternativeName>
</protein>